<gene>
    <name evidence="1" type="primary">psbU</name>
    <name type="ordered locus">syc2213_d</name>
</gene>
<organism>
    <name type="scientific">Synechococcus sp. (strain ATCC 27144 / PCC 6301 / SAUG 1402/1)</name>
    <name type="common">Anacystis nidulans</name>
    <dbReference type="NCBI Taxonomy" id="269084"/>
    <lineage>
        <taxon>Bacteria</taxon>
        <taxon>Bacillati</taxon>
        <taxon>Cyanobacteriota</taxon>
        <taxon>Cyanophyceae</taxon>
        <taxon>Synechococcales</taxon>
        <taxon>Synechococcaceae</taxon>
        <taxon>Synechococcus</taxon>
    </lineage>
</organism>
<evidence type="ECO:0000255" key="1">
    <source>
        <dbReference type="HAMAP-Rule" id="MF_00589"/>
    </source>
</evidence>
<feature type="signal peptide" evidence="1">
    <location>
        <begin position="1"/>
        <end position="28"/>
    </location>
</feature>
<feature type="chain" id="PRO_0000029605" description="Photosystem II extrinsic protein U">
    <location>
        <begin position="29"/>
        <end position="136"/>
    </location>
</feature>
<dbReference type="EMBL" id="AP008231">
    <property type="protein sequence ID" value="BAD80403.1"/>
    <property type="molecule type" value="Genomic_DNA"/>
</dbReference>
<dbReference type="RefSeq" id="WP_011244523.1">
    <property type="nucleotide sequence ID" value="NZ_CP085785.1"/>
</dbReference>
<dbReference type="SMR" id="Q5MZW7"/>
<dbReference type="GeneID" id="72430754"/>
<dbReference type="KEGG" id="syc:syc2213_d"/>
<dbReference type="eggNOG" id="COG1555">
    <property type="taxonomic scope" value="Bacteria"/>
</dbReference>
<dbReference type="Proteomes" id="UP000001175">
    <property type="component" value="Chromosome"/>
</dbReference>
<dbReference type="GO" id="GO:0019898">
    <property type="term" value="C:extrinsic component of membrane"/>
    <property type="evidence" value="ECO:0007669"/>
    <property type="project" value="InterPro"/>
</dbReference>
<dbReference type="GO" id="GO:0009654">
    <property type="term" value="C:photosystem II oxygen evolving complex"/>
    <property type="evidence" value="ECO:0007669"/>
    <property type="project" value="InterPro"/>
</dbReference>
<dbReference type="GO" id="GO:0031676">
    <property type="term" value="C:plasma membrane-derived thylakoid membrane"/>
    <property type="evidence" value="ECO:0007669"/>
    <property type="project" value="UniProtKB-SubCell"/>
</dbReference>
<dbReference type="GO" id="GO:0015979">
    <property type="term" value="P:photosynthesis"/>
    <property type="evidence" value="ECO:0007669"/>
    <property type="project" value="UniProtKB-UniRule"/>
</dbReference>
<dbReference type="GO" id="GO:0042549">
    <property type="term" value="P:photosystem II stabilization"/>
    <property type="evidence" value="ECO:0007669"/>
    <property type="project" value="InterPro"/>
</dbReference>
<dbReference type="Gene3D" id="1.10.150.320">
    <property type="entry name" value="Photosystem II 12 kDa extrinsic protein"/>
    <property type="match status" value="1"/>
</dbReference>
<dbReference type="HAMAP" id="MF_00589">
    <property type="entry name" value="PSII_PsbU"/>
    <property type="match status" value="1"/>
</dbReference>
<dbReference type="InterPro" id="IPR010527">
    <property type="entry name" value="PSII_PsbU"/>
</dbReference>
<dbReference type="NCBIfam" id="NF002708">
    <property type="entry name" value="PRK02515.1"/>
    <property type="match status" value="1"/>
</dbReference>
<dbReference type="Pfam" id="PF06514">
    <property type="entry name" value="PsbU"/>
    <property type="match status" value="1"/>
</dbReference>
<dbReference type="SUPFAM" id="SSF81585">
    <property type="entry name" value="PsbU/PolX domain-like"/>
    <property type="match status" value="1"/>
</dbReference>
<accession>Q5MZW7</accession>
<protein>
    <recommendedName>
        <fullName evidence="1">Photosystem II extrinsic protein U</fullName>
        <shortName evidence="1">PSII-U</shortName>
        <shortName evidence="1">PsbU</shortName>
    </recommendedName>
    <alternativeName>
        <fullName evidence="1">Photosystem II 12 kDa extrinsic protein</fullName>
        <shortName evidence="1">PS II complex 12 kDa extrinsic protein</shortName>
    </alternativeName>
</protein>
<sequence>MKQLAQRLFSLALVLALVLGISVQSAQALSLQSPLLAVAEAEIRNEADAQRIEAGGKLDLNNIGVRAFQQFPGMYPYLASKIVLGGPYDSVDDVLKLDLSDRQREVFEQYKENFTVTPPRDALNEGDDRINNGIYR</sequence>
<proteinExistence type="inferred from homology"/>
<comment type="function">
    <text evidence="1">One of the extrinsic, lumenal subunits of photosystem II (PSII). PSII is a light-driven water plastoquinone oxidoreductase, using light energy to abstract electrons from H(2)O, generating a proton gradient subsequently used for ATP formation. The extrinsic proteins stabilize the structure of photosystem II oxygen-evolving complex (OEC), the ion environment of oxygen evolution and protect the OEC against heat-induced inactivation.</text>
</comment>
<comment type="subunit">
    <text evidence="1">PSII is composed of 1 copy each of membrane proteins PsbA, PsbB, PsbC, PsbD, PsbE, PsbF, PsbH, PsbI, PsbJ, PsbK, PsbL, PsbM, PsbT, PsbX, PsbY, PsbZ, Psb30/Ycf12, peripheral proteins PsbO, CyanoQ (PsbQ), PsbU, PsbV and a large number of cofactors. It forms dimeric complexes.</text>
</comment>
<comment type="subcellular location">
    <subcellularLocation>
        <location evidence="1">Cellular thylakoid membrane</location>
        <topology evidence="1">Peripheral membrane protein</topology>
        <orientation evidence="1">Lumenal side</orientation>
    </subcellularLocation>
</comment>
<comment type="similarity">
    <text evidence="1">Belongs to the PsbU family.</text>
</comment>
<name>PSBU_SYNP6</name>
<reference key="1">
    <citation type="journal article" date="2007" name="Photosyn. Res.">
        <title>Complete nucleotide sequence of the freshwater unicellular cyanobacterium Synechococcus elongatus PCC 6301 chromosome: gene content and organization.</title>
        <authorList>
            <person name="Sugita C."/>
            <person name="Ogata K."/>
            <person name="Shikata M."/>
            <person name="Jikuya H."/>
            <person name="Takano J."/>
            <person name="Furumichi M."/>
            <person name="Kanehisa M."/>
            <person name="Omata T."/>
            <person name="Sugiura M."/>
            <person name="Sugita M."/>
        </authorList>
    </citation>
    <scope>NUCLEOTIDE SEQUENCE [LARGE SCALE GENOMIC DNA]</scope>
    <source>
        <strain>ATCC 27144 / PCC 6301 / SAUG 1402/1</strain>
    </source>
</reference>
<keyword id="KW-0249">Electron transport</keyword>
<keyword id="KW-0472">Membrane</keyword>
<keyword id="KW-0602">Photosynthesis</keyword>
<keyword id="KW-0604">Photosystem II</keyword>
<keyword id="KW-0732">Signal</keyword>
<keyword id="KW-0793">Thylakoid</keyword>
<keyword id="KW-0813">Transport</keyword>